<name>MDV1_VANPO</name>
<organism>
    <name type="scientific">Vanderwaltozyma polyspora (strain ATCC 22028 / DSM 70294 / BCRC 21397 / CBS 2163 / NBRC 10782 / NRRL Y-8283 / UCD 57-17)</name>
    <name type="common">Kluyveromyces polysporus</name>
    <dbReference type="NCBI Taxonomy" id="436907"/>
    <lineage>
        <taxon>Eukaryota</taxon>
        <taxon>Fungi</taxon>
        <taxon>Dikarya</taxon>
        <taxon>Ascomycota</taxon>
        <taxon>Saccharomycotina</taxon>
        <taxon>Saccharomycetes</taxon>
        <taxon>Saccharomycetales</taxon>
        <taxon>Saccharomycetaceae</taxon>
        <taxon>Vanderwaltozyma</taxon>
    </lineage>
</organism>
<feature type="chain" id="PRO_0000330113" description="Mitochondrial division protein 1">
    <location>
        <begin position="1"/>
        <end position="706"/>
    </location>
</feature>
<feature type="repeat" description="WD 1">
    <location>
        <begin position="394"/>
        <end position="434"/>
    </location>
</feature>
<feature type="repeat" description="WD 2">
    <location>
        <begin position="437"/>
        <end position="476"/>
    </location>
</feature>
<feature type="repeat" description="WD 3">
    <location>
        <begin position="495"/>
        <end position="534"/>
    </location>
</feature>
<feature type="repeat" description="WD 4">
    <location>
        <begin position="554"/>
        <end position="593"/>
    </location>
</feature>
<feature type="repeat" description="WD 5">
    <location>
        <begin position="596"/>
        <end position="635"/>
    </location>
</feature>
<feature type="repeat" description="WD 6">
    <location>
        <begin position="637"/>
        <end position="672"/>
    </location>
</feature>
<feature type="repeat" description="WD 7">
    <location>
        <begin position="677"/>
        <end position="706"/>
    </location>
</feature>
<feature type="region of interest" description="Disordered" evidence="3">
    <location>
        <begin position="160"/>
        <end position="181"/>
    </location>
</feature>
<feature type="region of interest" description="Disordered" evidence="3">
    <location>
        <begin position="305"/>
        <end position="328"/>
    </location>
</feature>
<feature type="coiled-coil region" evidence="2">
    <location>
        <begin position="227"/>
        <end position="264"/>
    </location>
</feature>
<accession>A7THX0</accession>
<evidence type="ECO:0000250" key="1"/>
<evidence type="ECO:0000255" key="2"/>
<evidence type="ECO:0000256" key="3">
    <source>
        <dbReference type="SAM" id="MobiDB-lite"/>
    </source>
</evidence>
<evidence type="ECO:0000305" key="4"/>
<keyword id="KW-0175">Coiled coil</keyword>
<keyword id="KW-0472">Membrane</keyword>
<keyword id="KW-0496">Mitochondrion</keyword>
<keyword id="KW-1000">Mitochondrion outer membrane</keyword>
<keyword id="KW-1185">Reference proteome</keyword>
<keyword id="KW-0677">Repeat</keyword>
<keyword id="KW-0853">WD repeat</keyword>
<protein>
    <recommendedName>
        <fullName>Mitochondrial division protein 1</fullName>
    </recommendedName>
</protein>
<proteinExistence type="inferred from homology"/>
<sequence length="706" mass="80436">MDDNEQFSQLRNVISTTASALLGIENLDKSILSSNSRYKKILSETIKNLGGDDSLVKLRKNFSNLKRQEESHDAYERYSGDDYFRNQLTDSRTTFRVLTYLSDEILKASLDDEKSNHDQGLLEFTNEEESGTKNTSSLFQGFEASLPILNERLENNDKNKYIKNSEGNDHNNNNDNNDDKNDKLFEFTNNYISSVSIDTEKISRSYSMKYLKTLSEDVLRKLNFTLIQEDVTKEEVEDLSIKLERLKERHQSACKRLETVEQDELFLENALSLIKDRMKFIQEYDLELESNDPEIEDINQNEKSYNEAKESNDLNTSQQNVEDLKPNTFVNNDKDVTVAKSEAIVSKVKTKNQKTINRLQRFYNEENRKSRKLPTTLLQSHYEPGTNIATIEKAHENGVYCMDFDMPFGTLCTAGYLDHTVNVWDLTRKVKVAEMSGHLATIQCMQLGSHYNMLITGGKDAMLKIWDINLATQLYQEDQSSIESDYNSCIHTFDSHSGGITALSFDSVHLVSASQDKTIRQWDLVNGKCIQTIDLSSVVKQNQTDIVNIPDFYSSSEPFVTGSLQCFDAALATGTRDGLVRLWDMRSGKVVRTFMGHTNAVTSLKFDSYNLISGSLDKSIRTWDLRTGSLSDLFAYDSPVYSIDFDSSNLVSAIGETSFKVYNRKDDKQWECVNSAEDTSSIYHVKYKNNYAVTGSNDGTIKAWVV</sequence>
<comment type="function">
    <text evidence="1">Involved in mitochondrial fission. Has a partially redundant function to CAF4 in acting as an adapter protein required to form mitochondrial fission complexes. Formation of these complexes is required to promote constriction and fission of the mitochondrial compartment at a late step in mitochondrial division (By similarity).</text>
</comment>
<comment type="subcellular location">
    <subcellularLocation>
        <location evidence="1">Mitochondrion outer membrane</location>
        <topology evidence="1">Peripheral membrane protein</topology>
        <orientation evidence="1">Cytoplasmic side</orientation>
    </subcellularLocation>
</comment>
<comment type="similarity">
    <text evidence="4">Belongs to the WD repeat MDV1/CAF4 family.</text>
</comment>
<dbReference type="EMBL" id="DS480393">
    <property type="protein sequence ID" value="EDO18132.1"/>
    <property type="molecule type" value="Genomic_DNA"/>
</dbReference>
<dbReference type="RefSeq" id="XP_001645990.1">
    <property type="nucleotide sequence ID" value="XM_001645940.1"/>
</dbReference>
<dbReference type="SMR" id="A7THX0"/>
<dbReference type="FunCoup" id="A7THX0">
    <property type="interactions" value="61"/>
</dbReference>
<dbReference type="STRING" id="436907.A7THX0"/>
<dbReference type="GeneID" id="5546402"/>
<dbReference type="KEGG" id="vpo:Kpol_1031p36"/>
<dbReference type="eggNOG" id="KOG4155">
    <property type="taxonomic scope" value="Eukaryota"/>
</dbReference>
<dbReference type="HOGENOM" id="CLU_012350_1_0_1"/>
<dbReference type="InParanoid" id="A7THX0"/>
<dbReference type="OMA" id="SHRTWIC"/>
<dbReference type="OrthoDB" id="496at2759"/>
<dbReference type="Proteomes" id="UP000000267">
    <property type="component" value="Unassembled WGS sequence"/>
</dbReference>
<dbReference type="GO" id="GO:0030126">
    <property type="term" value="C:COPI vesicle coat"/>
    <property type="evidence" value="ECO:0007669"/>
    <property type="project" value="TreeGrafter"/>
</dbReference>
<dbReference type="GO" id="GO:0005741">
    <property type="term" value="C:mitochondrial outer membrane"/>
    <property type="evidence" value="ECO:0007669"/>
    <property type="project" value="UniProtKB-SubCell"/>
</dbReference>
<dbReference type="GO" id="GO:0043130">
    <property type="term" value="F:ubiquitin binding"/>
    <property type="evidence" value="ECO:0007669"/>
    <property type="project" value="EnsemblFungi"/>
</dbReference>
<dbReference type="GO" id="GO:0006888">
    <property type="term" value="P:endoplasmic reticulum to Golgi vesicle-mediated transport"/>
    <property type="evidence" value="ECO:0007669"/>
    <property type="project" value="TreeGrafter"/>
</dbReference>
<dbReference type="GO" id="GO:0006891">
    <property type="term" value="P:intra-Golgi vesicle-mediated transport"/>
    <property type="evidence" value="ECO:0007669"/>
    <property type="project" value="TreeGrafter"/>
</dbReference>
<dbReference type="GO" id="GO:0006886">
    <property type="term" value="P:intracellular protein transport"/>
    <property type="evidence" value="ECO:0007669"/>
    <property type="project" value="TreeGrafter"/>
</dbReference>
<dbReference type="GO" id="GO:0000266">
    <property type="term" value="P:mitochondrial fission"/>
    <property type="evidence" value="ECO:0007669"/>
    <property type="project" value="EnsemblFungi"/>
</dbReference>
<dbReference type="GO" id="GO:0000002">
    <property type="term" value="P:mitochondrial genome maintenance"/>
    <property type="evidence" value="ECO:0007669"/>
    <property type="project" value="EnsemblFungi"/>
</dbReference>
<dbReference type="GO" id="GO:0016559">
    <property type="term" value="P:peroxisome fission"/>
    <property type="evidence" value="ECO:0007669"/>
    <property type="project" value="EnsemblFungi"/>
</dbReference>
<dbReference type="GO" id="GO:0090141">
    <property type="term" value="P:positive regulation of mitochondrial fission"/>
    <property type="evidence" value="ECO:0007669"/>
    <property type="project" value="EnsemblFungi"/>
</dbReference>
<dbReference type="GO" id="GO:0006890">
    <property type="term" value="P:retrograde vesicle-mediated transport, Golgi to endoplasmic reticulum"/>
    <property type="evidence" value="ECO:0007669"/>
    <property type="project" value="TreeGrafter"/>
</dbReference>
<dbReference type="CDD" id="cd22881">
    <property type="entry name" value="Mdv1_N"/>
    <property type="match status" value="1"/>
</dbReference>
<dbReference type="CDD" id="cd00200">
    <property type="entry name" value="WD40"/>
    <property type="match status" value="1"/>
</dbReference>
<dbReference type="Gene3D" id="6.10.280.220">
    <property type="match status" value="1"/>
</dbReference>
<dbReference type="Gene3D" id="2.130.10.10">
    <property type="entry name" value="YVTN repeat-like/Quinoprotein amine dehydrogenase"/>
    <property type="match status" value="2"/>
</dbReference>
<dbReference type="InterPro" id="IPR050844">
    <property type="entry name" value="Coatomer_complex_subunit"/>
</dbReference>
<dbReference type="InterPro" id="IPR020472">
    <property type="entry name" value="G-protein_beta_WD-40_rep"/>
</dbReference>
<dbReference type="InterPro" id="IPR015943">
    <property type="entry name" value="WD40/YVTN_repeat-like_dom_sf"/>
</dbReference>
<dbReference type="InterPro" id="IPR019775">
    <property type="entry name" value="WD40_repeat_CS"/>
</dbReference>
<dbReference type="InterPro" id="IPR036322">
    <property type="entry name" value="WD40_repeat_dom_sf"/>
</dbReference>
<dbReference type="InterPro" id="IPR001680">
    <property type="entry name" value="WD40_rpt"/>
</dbReference>
<dbReference type="PANTHER" id="PTHR19876">
    <property type="entry name" value="COATOMER"/>
    <property type="match status" value="1"/>
</dbReference>
<dbReference type="PANTHER" id="PTHR19876:SF2">
    <property type="entry name" value="COATOMER SUBUNIT BETA"/>
    <property type="match status" value="1"/>
</dbReference>
<dbReference type="Pfam" id="PF00400">
    <property type="entry name" value="WD40"/>
    <property type="match status" value="4"/>
</dbReference>
<dbReference type="PRINTS" id="PR00320">
    <property type="entry name" value="GPROTEINBRPT"/>
</dbReference>
<dbReference type="SMART" id="SM00320">
    <property type="entry name" value="WD40"/>
    <property type="match status" value="7"/>
</dbReference>
<dbReference type="SUPFAM" id="SSF50978">
    <property type="entry name" value="WD40 repeat-like"/>
    <property type="match status" value="1"/>
</dbReference>
<dbReference type="PROSITE" id="PS00678">
    <property type="entry name" value="WD_REPEATS_1"/>
    <property type="match status" value="4"/>
</dbReference>
<dbReference type="PROSITE" id="PS50082">
    <property type="entry name" value="WD_REPEATS_2"/>
    <property type="match status" value="6"/>
</dbReference>
<dbReference type="PROSITE" id="PS50294">
    <property type="entry name" value="WD_REPEATS_REGION"/>
    <property type="match status" value="1"/>
</dbReference>
<reference key="1">
    <citation type="journal article" date="2007" name="Proc. Natl. Acad. Sci. U.S.A.">
        <title>Independent sorting-out of thousands of duplicated gene pairs in two yeast species descended from a whole-genome duplication.</title>
        <authorList>
            <person name="Scannell D.R."/>
            <person name="Frank A.C."/>
            <person name="Conant G.C."/>
            <person name="Byrne K.P."/>
            <person name="Woolfit M."/>
            <person name="Wolfe K.H."/>
        </authorList>
    </citation>
    <scope>NUCLEOTIDE SEQUENCE [LARGE SCALE GENOMIC DNA]</scope>
    <source>
        <strain>ATCC 22028 / DSM 70294 / BCRC 21397 / CBS 2163 / NBRC 10782 / NRRL Y-8283 / UCD 57-17</strain>
    </source>
</reference>
<gene>
    <name type="primary">MDV1</name>
    <name type="ORF">Kpol_1031p36</name>
</gene>